<reference key="1">
    <citation type="journal article" date="2000" name="Proc. Natl. Acad. Sci. U.S.A.">
        <title>A family of peptidoglycan recognition proteins in the fruit fly Drosophila melanogaster.</title>
        <authorList>
            <person name="Werner T."/>
            <person name="Liu G."/>
            <person name="Kang D."/>
            <person name="Ekengren S."/>
            <person name="Steiner H."/>
            <person name="Hultmark D."/>
        </authorList>
    </citation>
    <scope>NUCLEOTIDE SEQUENCE [MRNA]</scope>
    <scope>TISSUE SPECIFICITY</scope>
    <scope>DEVELOPMENTAL STAGE</scope>
</reference>
<reference key="2">
    <citation type="journal article" date="2000" name="Science">
        <title>The genome sequence of Drosophila melanogaster.</title>
        <authorList>
            <person name="Adams M.D."/>
            <person name="Celniker S.E."/>
            <person name="Holt R.A."/>
            <person name="Evans C.A."/>
            <person name="Gocayne J.D."/>
            <person name="Amanatides P.G."/>
            <person name="Scherer S.E."/>
            <person name="Li P.W."/>
            <person name="Hoskins R.A."/>
            <person name="Galle R.F."/>
            <person name="George R.A."/>
            <person name="Lewis S.E."/>
            <person name="Richards S."/>
            <person name="Ashburner M."/>
            <person name="Henderson S.N."/>
            <person name="Sutton G.G."/>
            <person name="Wortman J.R."/>
            <person name="Yandell M.D."/>
            <person name="Zhang Q."/>
            <person name="Chen L.X."/>
            <person name="Brandon R.C."/>
            <person name="Rogers Y.-H.C."/>
            <person name="Blazej R.G."/>
            <person name="Champe M."/>
            <person name="Pfeiffer B.D."/>
            <person name="Wan K.H."/>
            <person name="Doyle C."/>
            <person name="Baxter E.G."/>
            <person name="Helt G."/>
            <person name="Nelson C.R."/>
            <person name="Miklos G.L.G."/>
            <person name="Abril J.F."/>
            <person name="Agbayani A."/>
            <person name="An H.-J."/>
            <person name="Andrews-Pfannkoch C."/>
            <person name="Baldwin D."/>
            <person name="Ballew R.M."/>
            <person name="Basu A."/>
            <person name="Baxendale J."/>
            <person name="Bayraktaroglu L."/>
            <person name="Beasley E.M."/>
            <person name="Beeson K.Y."/>
            <person name="Benos P.V."/>
            <person name="Berman B.P."/>
            <person name="Bhandari D."/>
            <person name="Bolshakov S."/>
            <person name="Borkova D."/>
            <person name="Botchan M.R."/>
            <person name="Bouck J."/>
            <person name="Brokstein P."/>
            <person name="Brottier P."/>
            <person name="Burtis K.C."/>
            <person name="Busam D.A."/>
            <person name="Butler H."/>
            <person name="Cadieu E."/>
            <person name="Center A."/>
            <person name="Chandra I."/>
            <person name="Cherry J.M."/>
            <person name="Cawley S."/>
            <person name="Dahlke C."/>
            <person name="Davenport L.B."/>
            <person name="Davies P."/>
            <person name="de Pablos B."/>
            <person name="Delcher A."/>
            <person name="Deng Z."/>
            <person name="Mays A.D."/>
            <person name="Dew I."/>
            <person name="Dietz S.M."/>
            <person name="Dodson K."/>
            <person name="Doup L.E."/>
            <person name="Downes M."/>
            <person name="Dugan-Rocha S."/>
            <person name="Dunkov B.C."/>
            <person name="Dunn P."/>
            <person name="Durbin K.J."/>
            <person name="Evangelista C.C."/>
            <person name="Ferraz C."/>
            <person name="Ferriera S."/>
            <person name="Fleischmann W."/>
            <person name="Fosler C."/>
            <person name="Gabrielian A.E."/>
            <person name="Garg N.S."/>
            <person name="Gelbart W.M."/>
            <person name="Glasser K."/>
            <person name="Glodek A."/>
            <person name="Gong F."/>
            <person name="Gorrell J.H."/>
            <person name="Gu Z."/>
            <person name="Guan P."/>
            <person name="Harris M."/>
            <person name="Harris N.L."/>
            <person name="Harvey D.A."/>
            <person name="Heiman T.J."/>
            <person name="Hernandez J.R."/>
            <person name="Houck J."/>
            <person name="Hostin D."/>
            <person name="Houston K.A."/>
            <person name="Howland T.J."/>
            <person name="Wei M.-H."/>
            <person name="Ibegwam C."/>
            <person name="Jalali M."/>
            <person name="Kalush F."/>
            <person name="Karpen G.H."/>
            <person name="Ke Z."/>
            <person name="Kennison J.A."/>
            <person name="Ketchum K.A."/>
            <person name="Kimmel B.E."/>
            <person name="Kodira C.D."/>
            <person name="Kraft C.L."/>
            <person name="Kravitz S."/>
            <person name="Kulp D."/>
            <person name="Lai Z."/>
            <person name="Lasko P."/>
            <person name="Lei Y."/>
            <person name="Levitsky A.A."/>
            <person name="Li J.H."/>
            <person name="Li Z."/>
            <person name="Liang Y."/>
            <person name="Lin X."/>
            <person name="Liu X."/>
            <person name="Mattei B."/>
            <person name="McIntosh T.C."/>
            <person name="McLeod M.P."/>
            <person name="McPherson D."/>
            <person name="Merkulov G."/>
            <person name="Milshina N.V."/>
            <person name="Mobarry C."/>
            <person name="Morris J."/>
            <person name="Moshrefi A."/>
            <person name="Mount S.M."/>
            <person name="Moy M."/>
            <person name="Murphy B."/>
            <person name="Murphy L."/>
            <person name="Muzny D.M."/>
            <person name="Nelson D.L."/>
            <person name="Nelson D.R."/>
            <person name="Nelson K.A."/>
            <person name="Nixon K."/>
            <person name="Nusskern D.R."/>
            <person name="Pacleb J.M."/>
            <person name="Palazzolo M."/>
            <person name="Pittman G.S."/>
            <person name="Pan S."/>
            <person name="Pollard J."/>
            <person name="Puri V."/>
            <person name="Reese M.G."/>
            <person name="Reinert K."/>
            <person name="Remington K."/>
            <person name="Saunders R.D.C."/>
            <person name="Scheeler F."/>
            <person name="Shen H."/>
            <person name="Shue B.C."/>
            <person name="Siden-Kiamos I."/>
            <person name="Simpson M."/>
            <person name="Skupski M.P."/>
            <person name="Smith T.J."/>
            <person name="Spier E."/>
            <person name="Spradling A.C."/>
            <person name="Stapleton M."/>
            <person name="Strong R."/>
            <person name="Sun E."/>
            <person name="Svirskas R."/>
            <person name="Tector C."/>
            <person name="Turner R."/>
            <person name="Venter E."/>
            <person name="Wang A.H."/>
            <person name="Wang X."/>
            <person name="Wang Z.-Y."/>
            <person name="Wassarman D.A."/>
            <person name="Weinstock G.M."/>
            <person name="Weissenbach J."/>
            <person name="Williams S.M."/>
            <person name="Woodage T."/>
            <person name="Worley K.C."/>
            <person name="Wu D."/>
            <person name="Yang S."/>
            <person name="Yao Q.A."/>
            <person name="Ye J."/>
            <person name="Yeh R.-F."/>
            <person name="Zaveri J.S."/>
            <person name="Zhan M."/>
            <person name="Zhang G."/>
            <person name="Zhao Q."/>
            <person name="Zheng L."/>
            <person name="Zheng X.H."/>
            <person name="Zhong F.N."/>
            <person name="Zhong W."/>
            <person name="Zhou X."/>
            <person name="Zhu S.C."/>
            <person name="Zhu X."/>
            <person name="Smith H.O."/>
            <person name="Gibbs R.A."/>
            <person name="Myers E.W."/>
            <person name="Rubin G.M."/>
            <person name="Venter J.C."/>
        </authorList>
    </citation>
    <scope>NUCLEOTIDE SEQUENCE [LARGE SCALE GENOMIC DNA]</scope>
    <source>
        <strain>Berkeley</strain>
    </source>
</reference>
<reference key="3">
    <citation type="journal article" date="2002" name="Genome Biol.">
        <title>Annotation of the Drosophila melanogaster euchromatic genome: a systematic review.</title>
        <authorList>
            <person name="Misra S."/>
            <person name="Crosby M.A."/>
            <person name="Mungall C.J."/>
            <person name="Matthews B.B."/>
            <person name="Campbell K.S."/>
            <person name="Hradecky P."/>
            <person name="Huang Y."/>
            <person name="Kaminker J.S."/>
            <person name="Millburn G.H."/>
            <person name="Prochnik S.E."/>
            <person name="Smith C.D."/>
            <person name="Tupy J.L."/>
            <person name="Whitfield E.J."/>
            <person name="Bayraktaroglu L."/>
            <person name="Berman B.P."/>
            <person name="Bettencourt B.R."/>
            <person name="Celniker S.E."/>
            <person name="de Grey A.D.N.J."/>
            <person name="Drysdale R.A."/>
            <person name="Harris N.L."/>
            <person name="Richter J."/>
            <person name="Russo S."/>
            <person name="Schroeder A.J."/>
            <person name="Shu S.Q."/>
            <person name="Stapleton M."/>
            <person name="Yamada C."/>
            <person name="Ashburner M."/>
            <person name="Gelbart W.M."/>
            <person name="Rubin G.M."/>
            <person name="Lewis S.E."/>
        </authorList>
    </citation>
    <scope>GENOME REANNOTATION</scope>
    <source>
        <strain>Berkeley</strain>
    </source>
</reference>
<reference key="4">
    <citation type="journal article" date="2002" name="Genome Biol.">
        <title>A Drosophila full-length cDNA resource.</title>
        <authorList>
            <person name="Stapleton M."/>
            <person name="Carlson J.W."/>
            <person name="Brokstein P."/>
            <person name="Yu C."/>
            <person name="Champe M."/>
            <person name="George R.A."/>
            <person name="Guarin H."/>
            <person name="Kronmiller B."/>
            <person name="Pacleb J.M."/>
            <person name="Park S."/>
            <person name="Wan K.H."/>
            <person name="Rubin G.M."/>
            <person name="Celniker S.E."/>
        </authorList>
    </citation>
    <scope>NUCLEOTIDE SEQUENCE [LARGE SCALE MRNA]</scope>
    <source>
        <strain>Berkeley</strain>
        <tissue>Head</tissue>
    </source>
</reference>
<accession>Q9GN97</accession>
<accession>A4V1I9</accession>
<name>PGPLD_DROME</name>
<feature type="chain" id="PRO_0000220625" description="Peptidoglycan-recognition protein LD">
    <location>
        <begin position="1"/>
        <end position="282"/>
    </location>
</feature>
<feature type="topological domain" description="Cytoplasmic" evidence="2">
    <location>
        <begin position="1"/>
        <end position="88"/>
    </location>
</feature>
<feature type="transmembrane region" description="Helical" evidence="2">
    <location>
        <begin position="89"/>
        <end position="111"/>
    </location>
</feature>
<feature type="topological domain" description="Extracellular" evidence="2">
    <location>
        <begin position="112"/>
        <end position="282"/>
    </location>
</feature>
<feature type="region of interest" description="Disordered" evidence="3">
    <location>
        <begin position="1"/>
        <end position="29"/>
    </location>
</feature>
<feature type="glycosylation site" description="N-linked (GlcNAc...) asparagine" evidence="2">
    <location>
        <position position="222"/>
    </location>
</feature>
<feature type="disulfide bond" evidence="1">
    <location>
        <begin position="162"/>
        <end position="166"/>
    </location>
</feature>
<keyword id="KW-1003">Cell membrane</keyword>
<keyword id="KW-1015">Disulfide bond</keyword>
<keyword id="KW-0325">Glycoprotein</keyword>
<keyword id="KW-0391">Immunity</keyword>
<keyword id="KW-0399">Innate immunity</keyword>
<keyword id="KW-0472">Membrane</keyword>
<keyword id="KW-1185">Reference proteome</keyword>
<keyword id="KW-0812">Transmembrane</keyword>
<keyword id="KW-1133">Transmembrane helix</keyword>
<comment type="function">
    <text evidence="1">Peptidoglycan-recognition protein probably involved in innate immunity by binding to peptidoglycans (PGN) of bacteria and activating the immune response.</text>
</comment>
<comment type="subcellular location">
    <subcellularLocation>
        <location evidence="5">Cell membrane</location>
        <topology evidence="5">Single-pass membrane protein</topology>
    </subcellularLocation>
</comment>
<comment type="tissue specificity">
    <text evidence="4">Expressed in uninduced hemocytes and mbn-2 cells.</text>
</comment>
<comment type="developmental stage">
    <text evidence="4">Highly expressed in 0-5 hours embryos and in adult females, suggesting that it is expressed maternally.</text>
</comment>
<comment type="similarity">
    <text evidence="5">Belongs to the N-acetylmuramoyl-L-alanine amidase 2 family.</text>
</comment>
<organism>
    <name type="scientific">Drosophila melanogaster</name>
    <name type="common">Fruit fly</name>
    <dbReference type="NCBI Taxonomy" id="7227"/>
    <lineage>
        <taxon>Eukaryota</taxon>
        <taxon>Metazoa</taxon>
        <taxon>Ecdysozoa</taxon>
        <taxon>Arthropoda</taxon>
        <taxon>Hexapoda</taxon>
        <taxon>Insecta</taxon>
        <taxon>Pterygota</taxon>
        <taxon>Neoptera</taxon>
        <taxon>Endopterygota</taxon>
        <taxon>Diptera</taxon>
        <taxon>Brachycera</taxon>
        <taxon>Muscomorpha</taxon>
        <taxon>Ephydroidea</taxon>
        <taxon>Drosophilidae</taxon>
        <taxon>Drosophila</taxon>
        <taxon>Sophophora</taxon>
    </lineage>
</organism>
<proteinExistence type="evidence at transcript level"/>
<protein>
    <recommendedName>
        <fullName>Peptidoglycan-recognition protein LD</fullName>
    </recommendedName>
</protein>
<dbReference type="EMBL" id="AF313389">
    <property type="protein sequence ID" value="AAG32062.1"/>
    <property type="molecule type" value="mRNA"/>
</dbReference>
<dbReference type="EMBL" id="AF313390">
    <property type="protein sequence ID" value="AAG32063.1"/>
    <property type="molecule type" value="mRNA"/>
</dbReference>
<dbReference type="EMBL" id="AE014296">
    <property type="protein sequence ID" value="AAN12114.1"/>
    <property type="molecule type" value="Genomic_DNA"/>
</dbReference>
<dbReference type="EMBL" id="AE014296">
    <property type="protein sequence ID" value="AAN12115.1"/>
    <property type="molecule type" value="Genomic_DNA"/>
</dbReference>
<dbReference type="EMBL" id="AE014296">
    <property type="protein sequence ID" value="AAO41277.1"/>
    <property type="molecule type" value="Genomic_DNA"/>
</dbReference>
<dbReference type="EMBL" id="AY075339">
    <property type="protein sequence ID" value="AAL68204.1"/>
    <property type="molecule type" value="mRNA"/>
</dbReference>
<dbReference type="RefSeq" id="NP_001027111.1">
    <property type="nucleotide sequence ID" value="NM_001031940.2"/>
</dbReference>
<dbReference type="RefSeq" id="NP_001027112.1">
    <property type="nucleotide sequence ID" value="NM_001031941.2"/>
</dbReference>
<dbReference type="RefSeq" id="NP_001027113.1">
    <property type="nucleotide sequence ID" value="NM_001031942.2"/>
</dbReference>
<dbReference type="SMR" id="Q9GN97"/>
<dbReference type="FunCoup" id="Q9GN97">
    <property type="interactions" value="110"/>
</dbReference>
<dbReference type="STRING" id="7227.FBpp0113069"/>
<dbReference type="GlyCosmos" id="Q9GN97">
    <property type="glycosylation" value="1 site, No reported glycans"/>
</dbReference>
<dbReference type="GlyGen" id="Q9GN97">
    <property type="glycosylation" value="1 site"/>
</dbReference>
<dbReference type="PaxDb" id="7227-FBpp0113069"/>
<dbReference type="EnsemblMetazoa" id="FBtr0091709">
    <property type="protein sequence ID" value="FBpp0099635"/>
    <property type="gene ID" value="FBgn0260458"/>
</dbReference>
<dbReference type="EnsemblMetazoa" id="FBtr0091710">
    <property type="protein sequence ID" value="FBpp0099636"/>
    <property type="gene ID" value="FBgn0260458"/>
</dbReference>
<dbReference type="EnsemblMetazoa" id="FBtr0091711">
    <property type="protein sequence ID" value="FBpp0099637"/>
    <property type="gene ID" value="FBgn0260458"/>
</dbReference>
<dbReference type="GeneID" id="3771920"/>
<dbReference type="KEGG" id="dme:Dmel_CG33717"/>
<dbReference type="AGR" id="FB:FBgn0260458"/>
<dbReference type="CTD" id="3771920"/>
<dbReference type="FlyBase" id="FBgn0260458">
    <property type="gene designation" value="PGRP-LD"/>
</dbReference>
<dbReference type="VEuPathDB" id="VectorBase:FBgn0260458"/>
<dbReference type="eggNOG" id="ENOG502TBSX">
    <property type="taxonomic scope" value="Eukaryota"/>
</dbReference>
<dbReference type="GeneTree" id="ENSGT00940000166535"/>
<dbReference type="HOGENOM" id="CLU_075160_0_0_1"/>
<dbReference type="InParanoid" id="Q9GN97"/>
<dbReference type="OrthoDB" id="7939567at2759"/>
<dbReference type="PhylomeDB" id="Q9GN97"/>
<dbReference type="Reactome" id="R-DME-6798695">
    <property type="pathway name" value="Neutrophil degranulation"/>
</dbReference>
<dbReference type="Reactome" id="R-DME-6803157">
    <property type="pathway name" value="Antimicrobial peptides"/>
</dbReference>
<dbReference type="BioGRID-ORCS" id="3771920">
    <property type="hits" value="0 hits in 1 CRISPR screen"/>
</dbReference>
<dbReference type="GenomeRNAi" id="3771920"/>
<dbReference type="PRO" id="PR:Q9GN97"/>
<dbReference type="Proteomes" id="UP000000803">
    <property type="component" value="Chromosome 3L"/>
</dbReference>
<dbReference type="Bgee" id="FBgn0260458">
    <property type="expression patterns" value="Expressed in male reproductive gland and 9 other cell types or tissues"/>
</dbReference>
<dbReference type="ExpressionAtlas" id="Q9GN97">
    <property type="expression patterns" value="baseline"/>
</dbReference>
<dbReference type="GO" id="GO:0005886">
    <property type="term" value="C:plasma membrane"/>
    <property type="evidence" value="ECO:0000303"/>
    <property type="project" value="UniProtKB"/>
</dbReference>
<dbReference type="GO" id="GO:0042834">
    <property type="term" value="F:peptidoglycan binding"/>
    <property type="evidence" value="ECO:0000303"/>
    <property type="project" value="UniProtKB"/>
</dbReference>
<dbReference type="GO" id="GO:0008270">
    <property type="term" value="F:zinc ion binding"/>
    <property type="evidence" value="ECO:0007669"/>
    <property type="project" value="InterPro"/>
</dbReference>
<dbReference type="GO" id="GO:0045087">
    <property type="term" value="P:innate immune response"/>
    <property type="evidence" value="ECO:0000303"/>
    <property type="project" value="UniProtKB"/>
</dbReference>
<dbReference type="CDD" id="cd06583">
    <property type="entry name" value="PGRP"/>
    <property type="match status" value="1"/>
</dbReference>
<dbReference type="FunFam" id="3.40.80.10:FF:000025">
    <property type="entry name" value="Peptidoglycan-recognition protein LD"/>
    <property type="match status" value="1"/>
</dbReference>
<dbReference type="Gene3D" id="3.40.80.10">
    <property type="entry name" value="Peptidoglycan recognition protein-like"/>
    <property type="match status" value="1"/>
</dbReference>
<dbReference type="InterPro" id="IPR036505">
    <property type="entry name" value="Amidase/PGRP_sf"/>
</dbReference>
<dbReference type="InterPro" id="IPR002502">
    <property type="entry name" value="Amidase_domain"/>
</dbReference>
<dbReference type="InterPro" id="IPR015510">
    <property type="entry name" value="PGRP"/>
</dbReference>
<dbReference type="InterPro" id="IPR006619">
    <property type="entry name" value="PGRP_domain_met/bac"/>
</dbReference>
<dbReference type="PANTHER" id="PTHR11022">
    <property type="entry name" value="PEPTIDOGLYCAN RECOGNITION PROTEIN"/>
    <property type="match status" value="1"/>
</dbReference>
<dbReference type="PANTHER" id="PTHR11022:SF73">
    <property type="entry name" value="PEPTIDOGLYCAN-RECOGNITION PROTEIN LD"/>
    <property type="match status" value="1"/>
</dbReference>
<dbReference type="SMART" id="SM00701">
    <property type="entry name" value="PGRP"/>
    <property type="match status" value="1"/>
</dbReference>
<dbReference type="SUPFAM" id="SSF55846">
    <property type="entry name" value="N-acetylmuramoyl-L-alanine amidase-like"/>
    <property type="match status" value="1"/>
</dbReference>
<sequence length="282" mass="31104">MDSSHIAVRVARRSPSPAAVSQSSYGSLGSSQDIHIRVDKEGVASESTPLLAAAQRSIKTSSSLTASVSASSTTPSNCRRNPTLHEDCFNWRSVGLLVMCASALALAAYLLWRQTQTPDFGYRLSIVGHGIWSDMELQGRGTLFDPIGVGTVIFTHTGSNECHDDCPDVLHKLERSHVGELPYNFLVAGDCQVFEAQGWHYRSQYPRDLNGIDSLVMAFVGNFSGRPPIDCQLMAAQALILESLKRRILQPIYQLFVLGSYTDALQRELRHWPHYASHQTSK</sequence>
<gene>
    <name type="primary">PGRP-LD</name>
    <name type="ORF">CG33717</name>
</gene>
<evidence type="ECO:0000250" key="1"/>
<evidence type="ECO:0000255" key="2"/>
<evidence type="ECO:0000256" key="3">
    <source>
        <dbReference type="SAM" id="MobiDB-lite"/>
    </source>
</evidence>
<evidence type="ECO:0000269" key="4">
    <source>
    </source>
</evidence>
<evidence type="ECO:0000305" key="5"/>